<name>RL18_PSEAB</name>
<accession>Q02T64</accession>
<keyword id="KW-0687">Ribonucleoprotein</keyword>
<keyword id="KW-0689">Ribosomal protein</keyword>
<keyword id="KW-0694">RNA-binding</keyword>
<keyword id="KW-0699">rRNA-binding</keyword>
<gene>
    <name evidence="1" type="primary">rplR</name>
    <name type="ordered locus">PA14_09010</name>
</gene>
<organism>
    <name type="scientific">Pseudomonas aeruginosa (strain UCBPP-PA14)</name>
    <dbReference type="NCBI Taxonomy" id="208963"/>
    <lineage>
        <taxon>Bacteria</taxon>
        <taxon>Pseudomonadati</taxon>
        <taxon>Pseudomonadota</taxon>
        <taxon>Gammaproteobacteria</taxon>
        <taxon>Pseudomonadales</taxon>
        <taxon>Pseudomonadaceae</taxon>
        <taxon>Pseudomonas</taxon>
    </lineage>
</organism>
<protein>
    <recommendedName>
        <fullName evidence="1">Large ribosomal subunit protein uL18</fullName>
    </recommendedName>
    <alternativeName>
        <fullName evidence="2">50S ribosomal protein L18</fullName>
    </alternativeName>
</protein>
<dbReference type="EMBL" id="CP000438">
    <property type="protein sequence ID" value="ABJ13518.1"/>
    <property type="molecule type" value="Genomic_DNA"/>
</dbReference>
<dbReference type="RefSeq" id="WP_003093698.1">
    <property type="nucleotide sequence ID" value="NZ_CP034244.1"/>
</dbReference>
<dbReference type="SMR" id="Q02T64"/>
<dbReference type="GeneID" id="77219214"/>
<dbReference type="KEGG" id="pau:PA14_09010"/>
<dbReference type="PseudoCAP" id="PA14_09010"/>
<dbReference type="HOGENOM" id="CLU_098841_0_1_6"/>
<dbReference type="BioCyc" id="PAER208963:G1G74-752-MONOMER"/>
<dbReference type="Proteomes" id="UP000000653">
    <property type="component" value="Chromosome"/>
</dbReference>
<dbReference type="GO" id="GO:0022625">
    <property type="term" value="C:cytosolic large ribosomal subunit"/>
    <property type="evidence" value="ECO:0007669"/>
    <property type="project" value="TreeGrafter"/>
</dbReference>
<dbReference type="GO" id="GO:0008097">
    <property type="term" value="F:5S rRNA binding"/>
    <property type="evidence" value="ECO:0007669"/>
    <property type="project" value="TreeGrafter"/>
</dbReference>
<dbReference type="GO" id="GO:0003735">
    <property type="term" value="F:structural constituent of ribosome"/>
    <property type="evidence" value="ECO:0007669"/>
    <property type="project" value="InterPro"/>
</dbReference>
<dbReference type="GO" id="GO:0006412">
    <property type="term" value="P:translation"/>
    <property type="evidence" value="ECO:0007669"/>
    <property type="project" value="UniProtKB-UniRule"/>
</dbReference>
<dbReference type="CDD" id="cd00432">
    <property type="entry name" value="Ribosomal_L18_L5e"/>
    <property type="match status" value="1"/>
</dbReference>
<dbReference type="FunFam" id="3.30.420.100:FF:000001">
    <property type="entry name" value="50S ribosomal protein L18"/>
    <property type="match status" value="1"/>
</dbReference>
<dbReference type="Gene3D" id="3.30.420.100">
    <property type="match status" value="1"/>
</dbReference>
<dbReference type="HAMAP" id="MF_01337_B">
    <property type="entry name" value="Ribosomal_uL18_B"/>
    <property type="match status" value="1"/>
</dbReference>
<dbReference type="InterPro" id="IPR004389">
    <property type="entry name" value="Ribosomal_uL18_bac-type"/>
</dbReference>
<dbReference type="InterPro" id="IPR005484">
    <property type="entry name" value="Ribosomal_uL18_bac/euk"/>
</dbReference>
<dbReference type="NCBIfam" id="TIGR00060">
    <property type="entry name" value="L18_bact"/>
    <property type="match status" value="1"/>
</dbReference>
<dbReference type="PANTHER" id="PTHR12899">
    <property type="entry name" value="39S RIBOSOMAL PROTEIN L18, MITOCHONDRIAL"/>
    <property type="match status" value="1"/>
</dbReference>
<dbReference type="PANTHER" id="PTHR12899:SF3">
    <property type="entry name" value="LARGE RIBOSOMAL SUBUNIT PROTEIN UL18M"/>
    <property type="match status" value="1"/>
</dbReference>
<dbReference type="Pfam" id="PF00861">
    <property type="entry name" value="Ribosomal_L18p"/>
    <property type="match status" value="1"/>
</dbReference>
<dbReference type="SUPFAM" id="SSF53137">
    <property type="entry name" value="Translational machinery components"/>
    <property type="match status" value="1"/>
</dbReference>
<feature type="chain" id="PRO_1000053086" description="Large ribosomal subunit protein uL18">
    <location>
        <begin position="1"/>
        <end position="116"/>
    </location>
</feature>
<reference key="1">
    <citation type="journal article" date="2006" name="Genome Biol.">
        <title>Genomic analysis reveals that Pseudomonas aeruginosa virulence is combinatorial.</title>
        <authorList>
            <person name="Lee D.G."/>
            <person name="Urbach J.M."/>
            <person name="Wu G."/>
            <person name="Liberati N.T."/>
            <person name="Feinbaum R.L."/>
            <person name="Miyata S."/>
            <person name="Diggins L.T."/>
            <person name="He J."/>
            <person name="Saucier M."/>
            <person name="Deziel E."/>
            <person name="Friedman L."/>
            <person name="Li L."/>
            <person name="Grills G."/>
            <person name="Montgomery K."/>
            <person name="Kucherlapati R."/>
            <person name="Rahme L.G."/>
            <person name="Ausubel F.M."/>
        </authorList>
    </citation>
    <scope>NUCLEOTIDE SEQUENCE [LARGE SCALE GENOMIC DNA]</scope>
    <source>
        <strain>UCBPP-PA14</strain>
    </source>
</reference>
<evidence type="ECO:0000255" key="1">
    <source>
        <dbReference type="HAMAP-Rule" id="MF_01337"/>
    </source>
</evidence>
<evidence type="ECO:0000305" key="2"/>
<sequence>MSVKKETRLRRARKARLKMRELETVRLCVYRSSQHIYAQVIAADGGKVLASASTLDKDLREGATGNIDAAKKVGQLVAERAKAAGVTQVAFDRSGFKYHGRVKALADAAREGGLEF</sequence>
<proteinExistence type="inferred from homology"/>
<comment type="function">
    <text evidence="1">This is one of the proteins that bind and probably mediate the attachment of the 5S RNA into the large ribosomal subunit, where it forms part of the central protuberance.</text>
</comment>
<comment type="subunit">
    <text evidence="1">Part of the 50S ribosomal subunit; part of the 5S rRNA/L5/L18/L25 subcomplex. Contacts the 5S and 23S rRNAs.</text>
</comment>
<comment type="similarity">
    <text evidence="1">Belongs to the universal ribosomal protein uL18 family.</text>
</comment>